<keyword id="KW-0378">Hydrolase</keyword>
<keyword id="KW-0479">Metal-binding</keyword>
<keyword id="KW-0665">Pyrimidine biosynthesis</keyword>
<keyword id="KW-0862">Zinc</keyword>
<proteinExistence type="inferred from homology"/>
<accession>Q97C35</accession>
<sequence length="415" mass="46139">MDRAFCGNFYYNGKFDYLEVTVKDGVIESIKKDAGNIARSYLPGAVLPAATDIHVHFRTPGETDKEDFSTGSLSAIFGGTTLVMDMPNNIIPIKDYNAFSDKLGVINGTSYSDFALYSMETGSNSLIVDSRSIGLKVYLGGSTNAAGTMAIPDQEAEMINEKGFTVIFHGELEECLRKHQSETKNLREHNLSRPIECELAAAGYVGSLNLKSKIMAHVSSPEVSGDFLREVTPHHLLLNDEMPLGSIGKVNPPLRDRNTQERLLYAYISGQFDILSSDHAPHTEKDKAEFEYAKSGIIGVETRIPLMLALVKKKILFLDVLYKTGIERPPSIFGIRKGKIEVGYDADFMCVDFTNEKKVNEDRLHSKLPRSPFNGMDAIFPSHVVMRGEVVIDNYEEISDPLGRFVPKGYYDQKL</sequence>
<reference key="1">
    <citation type="journal article" date="2000" name="Proc. Natl. Acad. Sci. U.S.A.">
        <title>Archaeal adaptation to higher temperatures revealed by genomic sequence of Thermoplasma volcanium.</title>
        <authorList>
            <person name="Kawashima T."/>
            <person name="Amano N."/>
            <person name="Koike H."/>
            <person name="Makino S."/>
            <person name="Higuchi S."/>
            <person name="Kawashima-Ohya Y."/>
            <person name="Watanabe K."/>
            <person name="Yamazaki M."/>
            <person name="Kanehori K."/>
            <person name="Kawamoto T."/>
            <person name="Nunoshiba T."/>
            <person name="Yamamoto Y."/>
            <person name="Aramaki H."/>
            <person name="Makino K."/>
            <person name="Suzuki M."/>
        </authorList>
    </citation>
    <scope>NUCLEOTIDE SEQUENCE [LARGE SCALE GENOMIC DNA]</scope>
    <source>
        <strain>ATCC 51530 / DSM 4299 / JCM 9571 / NBRC 15438 / GSS1</strain>
    </source>
</reference>
<organism>
    <name type="scientific">Thermoplasma volcanium (strain ATCC 51530 / DSM 4299 / JCM 9571 / NBRC 15438 / GSS1)</name>
    <dbReference type="NCBI Taxonomy" id="273116"/>
    <lineage>
        <taxon>Archaea</taxon>
        <taxon>Methanobacteriati</taxon>
        <taxon>Thermoplasmatota</taxon>
        <taxon>Thermoplasmata</taxon>
        <taxon>Thermoplasmatales</taxon>
        <taxon>Thermoplasmataceae</taxon>
        <taxon>Thermoplasma</taxon>
    </lineage>
</organism>
<dbReference type="EC" id="3.5.2.3" evidence="1"/>
<dbReference type="EMBL" id="BA000011">
    <property type="protein sequence ID" value="BAB59412.1"/>
    <property type="molecule type" value="Genomic_DNA"/>
</dbReference>
<dbReference type="RefSeq" id="WP_010916527.1">
    <property type="nucleotide sequence ID" value="NC_002689.2"/>
</dbReference>
<dbReference type="SMR" id="Q97C35"/>
<dbReference type="STRING" id="273116.gene:9381043"/>
<dbReference type="PaxDb" id="273116-14324484"/>
<dbReference type="GeneID" id="1440785"/>
<dbReference type="KEGG" id="tvo:TVG0282239"/>
<dbReference type="eggNOG" id="arCOG00689">
    <property type="taxonomic scope" value="Archaea"/>
</dbReference>
<dbReference type="HOGENOM" id="CLU_015572_1_1_2"/>
<dbReference type="OrthoDB" id="50279at2157"/>
<dbReference type="PhylomeDB" id="Q97C35"/>
<dbReference type="UniPathway" id="UPA00070">
    <property type="reaction ID" value="UER00117"/>
</dbReference>
<dbReference type="Proteomes" id="UP000001017">
    <property type="component" value="Chromosome"/>
</dbReference>
<dbReference type="GO" id="GO:0005737">
    <property type="term" value="C:cytoplasm"/>
    <property type="evidence" value="ECO:0007669"/>
    <property type="project" value="TreeGrafter"/>
</dbReference>
<dbReference type="GO" id="GO:0004038">
    <property type="term" value="F:allantoinase activity"/>
    <property type="evidence" value="ECO:0007669"/>
    <property type="project" value="TreeGrafter"/>
</dbReference>
<dbReference type="GO" id="GO:0004151">
    <property type="term" value="F:dihydroorotase activity"/>
    <property type="evidence" value="ECO:0007669"/>
    <property type="project" value="UniProtKB-UniRule"/>
</dbReference>
<dbReference type="GO" id="GO:0008270">
    <property type="term" value="F:zinc ion binding"/>
    <property type="evidence" value="ECO:0007669"/>
    <property type="project" value="UniProtKB-UniRule"/>
</dbReference>
<dbReference type="GO" id="GO:0044205">
    <property type="term" value="P:'de novo' UMP biosynthetic process"/>
    <property type="evidence" value="ECO:0007669"/>
    <property type="project" value="UniProtKB-UniRule"/>
</dbReference>
<dbReference type="GO" id="GO:0006145">
    <property type="term" value="P:purine nucleobase catabolic process"/>
    <property type="evidence" value="ECO:0007669"/>
    <property type="project" value="TreeGrafter"/>
</dbReference>
<dbReference type="Gene3D" id="3.20.20.140">
    <property type="entry name" value="Metal-dependent hydrolases"/>
    <property type="match status" value="1"/>
</dbReference>
<dbReference type="Gene3D" id="2.30.40.10">
    <property type="entry name" value="Urease, subunit C, domain 1"/>
    <property type="match status" value="1"/>
</dbReference>
<dbReference type="HAMAP" id="MF_00220_A">
    <property type="entry name" value="PyrC_classI_A"/>
    <property type="match status" value="1"/>
</dbReference>
<dbReference type="InterPro" id="IPR006680">
    <property type="entry name" value="Amidohydro-rel"/>
</dbReference>
<dbReference type="InterPro" id="IPR004722">
    <property type="entry name" value="DHOase"/>
</dbReference>
<dbReference type="InterPro" id="IPR050138">
    <property type="entry name" value="DHOase/Allantoinase_Hydrolase"/>
</dbReference>
<dbReference type="InterPro" id="IPR002195">
    <property type="entry name" value="Dihydroorotase_CS"/>
</dbReference>
<dbReference type="InterPro" id="IPR011059">
    <property type="entry name" value="Metal-dep_hydrolase_composite"/>
</dbReference>
<dbReference type="InterPro" id="IPR032466">
    <property type="entry name" value="Metal_Hydrolase"/>
</dbReference>
<dbReference type="NCBIfam" id="NF002284">
    <property type="entry name" value="PRK01211.1"/>
    <property type="match status" value="1"/>
</dbReference>
<dbReference type="PANTHER" id="PTHR43668">
    <property type="entry name" value="ALLANTOINASE"/>
    <property type="match status" value="1"/>
</dbReference>
<dbReference type="PANTHER" id="PTHR43668:SF2">
    <property type="entry name" value="ALLANTOINASE"/>
    <property type="match status" value="1"/>
</dbReference>
<dbReference type="Pfam" id="PF01979">
    <property type="entry name" value="Amidohydro_1"/>
    <property type="match status" value="1"/>
</dbReference>
<dbReference type="SUPFAM" id="SSF51338">
    <property type="entry name" value="Composite domain of metallo-dependent hydrolases"/>
    <property type="match status" value="1"/>
</dbReference>
<dbReference type="SUPFAM" id="SSF51556">
    <property type="entry name" value="Metallo-dependent hydrolases"/>
    <property type="match status" value="1"/>
</dbReference>
<dbReference type="PROSITE" id="PS00482">
    <property type="entry name" value="DIHYDROOROTASE_1"/>
    <property type="match status" value="1"/>
</dbReference>
<dbReference type="PROSITE" id="PS00483">
    <property type="entry name" value="DIHYDROOROTASE_2"/>
    <property type="match status" value="1"/>
</dbReference>
<gene>
    <name evidence="1" type="primary">pyrC</name>
    <name type="ordered locus">TV0270</name>
    <name type="ORF">TVG0282239</name>
</gene>
<comment type="function">
    <text evidence="1">Catalyzes the reversible cyclization of carbamoyl aspartate to dihydroorotate.</text>
</comment>
<comment type="catalytic activity">
    <reaction evidence="1">
        <text>(S)-dihydroorotate + H2O = N-carbamoyl-L-aspartate + H(+)</text>
        <dbReference type="Rhea" id="RHEA:24296"/>
        <dbReference type="ChEBI" id="CHEBI:15377"/>
        <dbReference type="ChEBI" id="CHEBI:15378"/>
        <dbReference type="ChEBI" id="CHEBI:30864"/>
        <dbReference type="ChEBI" id="CHEBI:32814"/>
        <dbReference type="EC" id="3.5.2.3"/>
    </reaction>
</comment>
<comment type="cofactor">
    <cofactor evidence="1">
        <name>Zn(2+)</name>
        <dbReference type="ChEBI" id="CHEBI:29105"/>
    </cofactor>
    <text evidence="1">Binds 2 Zn(2+) ions per subunit.</text>
</comment>
<comment type="pathway">
    <text evidence="1">Pyrimidine metabolism; UMP biosynthesis via de novo pathway; (S)-dihydroorotate from bicarbonate: step 3/3.</text>
</comment>
<comment type="similarity">
    <text evidence="1">Belongs to the metallo-dependent hydrolases superfamily. DHOase family. Class I DHOase subfamily.</text>
</comment>
<protein>
    <recommendedName>
        <fullName evidence="1">Dihydroorotase</fullName>
        <shortName evidence="1">DHOase</shortName>
        <ecNumber evidence="1">3.5.2.3</ecNumber>
    </recommendedName>
</protein>
<feature type="chain" id="PRO_0000147283" description="Dihydroorotase">
    <location>
        <begin position="1"/>
        <end position="415"/>
    </location>
</feature>
<feature type="active site" evidence="1">
    <location>
        <position position="278"/>
    </location>
</feature>
<feature type="binding site" evidence="1">
    <location>
        <position position="54"/>
    </location>
    <ligand>
        <name>Zn(2+)</name>
        <dbReference type="ChEBI" id="CHEBI:29105"/>
        <label>1</label>
    </ligand>
</feature>
<feature type="binding site" evidence="1">
    <location>
        <begin position="56"/>
        <end position="58"/>
    </location>
    <ligand>
        <name>substrate</name>
    </ligand>
</feature>
<feature type="binding site" evidence="1">
    <location>
        <position position="56"/>
    </location>
    <ligand>
        <name>Zn(2+)</name>
        <dbReference type="ChEBI" id="CHEBI:29105"/>
        <label>1</label>
    </ligand>
</feature>
<feature type="binding site" evidence="1">
    <location>
        <position position="88"/>
    </location>
    <ligand>
        <name>substrate</name>
    </ligand>
</feature>
<feature type="binding site" evidence="1">
    <location>
        <position position="136"/>
    </location>
    <ligand>
        <name>Zn(2+)</name>
        <dbReference type="ChEBI" id="CHEBI:29105"/>
        <label>1</label>
    </ligand>
</feature>
<feature type="binding site" evidence="1">
    <location>
        <position position="136"/>
    </location>
    <ligand>
        <name>Zn(2+)</name>
        <dbReference type="ChEBI" id="CHEBI:29105"/>
        <label>2</label>
    </ligand>
</feature>
<feature type="binding site" evidence="1">
    <location>
        <position position="169"/>
    </location>
    <ligand>
        <name>Zn(2+)</name>
        <dbReference type="ChEBI" id="CHEBI:29105"/>
        <label>2</label>
    </ligand>
</feature>
<feature type="binding site" evidence="1">
    <location>
        <position position="217"/>
    </location>
    <ligand>
        <name>Zn(2+)</name>
        <dbReference type="ChEBI" id="CHEBI:29105"/>
        <label>2</label>
    </ligand>
</feature>
<feature type="binding site" evidence="1">
    <location>
        <position position="278"/>
    </location>
    <ligand>
        <name>Zn(2+)</name>
        <dbReference type="ChEBI" id="CHEBI:29105"/>
        <label>1</label>
    </ligand>
</feature>
<feature type="binding site" evidence="1">
    <location>
        <position position="282"/>
    </location>
    <ligand>
        <name>substrate</name>
    </ligand>
</feature>
<feature type="modified residue" description="N6-carboxylysine" evidence="1">
    <location>
        <position position="136"/>
    </location>
</feature>
<evidence type="ECO:0000255" key="1">
    <source>
        <dbReference type="HAMAP-Rule" id="MF_00220"/>
    </source>
</evidence>
<name>PYRC_THEVO</name>